<protein>
    <recommendedName>
        <fullName evidence="1">Indole-3-glycerol phosphate synthase</fullName>
        <shortName evidence="1">IGPS</shortName>
        <ecNumber evidence="1">4.1.1.48</ecNumber>
    </recommendedName>
</protein>
<comment type="catalytic activity">
    <reaction evidence="1">
        <text>1-(2-carboxyphenylamino)-1-deoxy-D-ribulose 5-phosphate + H(+) = (1S,2R)-1-C-(indol-3-yl)glycerol 3-phosphate + CO2 + H2O</text>
        <dbReference type="Rhea" id="RHEA:23476"/>
        <dbReference type="ChEBI" id="CHEBI:15377"/>
        <dbReference type="ChEBI" id="CHEBI:15378"/>
        <dbReference type="ChEBI" id="CHEBI:16526"/>
        <dbReference type="ChEBI" id="CHEBI:58613"/>
        <dbReference type="ChEBI" id="CHEBI:58866"/>
        <dbReference type="EC" id="4.1.1.48"/>
    </reaction>
</comment>
<comment type="pathway">
    <text evidence="1">Amino-acid biosynthesis; L-tryptophan biosynthesis; L-tryptophan from chorismate: step 4/5.</text>
</comment>
<comment type="similarity">
    <text evidence="1">Belongs to the TrpC family.</text>
</comment>
<name>TRPC_PSEF5</name>
<organism>
    <name type="scientific">Pseudomonas fluorescens (strain ATCC BAA-477 / NRRL B-23932 / Pf-5)</name>
    <dbReference type="NCBI Taxonomy" id="220664"/>
    <lineage>
        <taxon>Bacteria</taxon>
        <taxon>Pseudomonadati</taxon>
        <taxon>Pseudomonadota</taxon>
        <taxon>Gammaproteobacteria</taxon>
        <taxon>Pseudomonadales</taxon>
        <taxon>Pseudomonadaceae</taxon>
        <taxon>Pseudomonas</taxon>
    </lineage>
</organism>
<feature type="chain" id="PRO_1000018533" description="Indole-3-glycerol phosphate synthase">
    <location>
        <begin position="1"/>
        <end position="278"/>
    </location>
</feature>
<gene>
    <name evidence="1" type="primary">trpC</name>
    <name type="ordered locus">PFL_5621</name>
</gene>
<dbReference type="EC" id="4.1.1.48" evidence="1"/>
<dbReference type="EMBL" id="CP000076">
    <property type="protein sequence ID" value="AAY94814.1"/>
    <property type="molecule type" value="Genomic_DNA"/>
</dbReference>
<dbReference type="RefSeq" id="WP_011063799.1">
    <property type="nucleotide sequence ID" value="NC_004129.6"/>
</dbReference>
<dbReference type="SMR" id="Q4K503"/>
<dbReference type="STRING" id="220664.PFL_5621"/>
<dbReference type="GeneID" id="57478571"/>
<dbReference type="KEGG" id="pfl:PFL_5621"/>
<dbReference type="PATRIC" id="fig|220664.5.peg.5733"/>
<dbReference type="eggNOG" id="COG0134">
    <property type="taxonomic scope" value="Bacteria"/>
</dbReference>
<dbReference type="HOGENOM" id="CLU_034247_2_0_6"/>
<dbReference type="UniPathway" id="UPA00035">
    <property type="reaction ID" value="UER00043"/>
</dbReference>
<dbReference type="Proteomes" id="UP000008540">
    <property type="component" value="Chromosome"/>
</dbReference>
<dbReference type="GO" id="GO:0004425">
    <property type="term" value="F:indole-3-glycerol-phosphate synthase activity"/>
    <property type="evidence" value="ECO:0007669"/>
    <property type="project" value="UniProtKB-UniRule"/>
</dbReference>
<dbReference type="GO" id="GO:0004640">
    <property type="term" value="F:phosphoribosylanthranilate isomerase activity"/>
    <property type="evidence" value="ECO:0007669"/>
    <property type="project" value="TreeGrafter"/>
</dbReference>
<dbReference type="GO" id="GO:0000162">
    <property type="term" value="P:L-tryptophan biosynthetic process"/>
    <property type="evidence" value="ECO:0007669"/>
    <property type="project" value="UniProtKB-UniRule"/>
</dbReference>
<dbReference type="CDD" id="cd00331">
    <property type="entry name" value="IGPS"/>
    <property type="match status" value="1"/>
</dbReference>
<dbReference type="FunFam" id="3.20.20.70:FF:000024">
    <property type="entry name" value="Indole-3-glycerol phosphate synthase"/>
    <property type="match status" value="1"/>
</dbReference>
<dbReference type="Gene3D" id="3.20.20.70">
    <property type="entry name" value="Aldolase class I"/>
    <property type="match status" value="1"/>
</dbReference>
<dbReference type="HAMAP" id="MF_00134_B">
    <property type="entry name" value="IGPS_B"/>
    <property type="match status" value="1"/>
</dbReference>
<dbReference type="InterPro" id="IPR013785">
    <property type="entry name" value="Aldolase_TIM"/>
</dbReference>
<dbReference type="InterPro" id="IPR045186">
    <property type="entry name" value="Indole-3-glycerol_P_synth"/>
</dbReference>
<dbReference type="InterPro" id="IPR013798">
    <property type="entry name" value="Indole-3-glycerol_P_synth_dom"/>
</dbReference>
<dbReference type="InterPro" id="IPR001468">
    <property type="entry name" value="Indole-3-GlycerolPSynthase_CS"/>
</dbReference>
<dbReference type="InterPro" id="IPR011060">
    <property type="entry name" value="RibuloseP-bd_barrel"/>
</dbReference>
<dbReference type="NCBIfam" id="NF001370">
    <property type="entry name" value="PRK00278.1-2"/>
    <property type="match status" value="1"/>
</dbReference>
<dbReference type="NCBIfam" id="NF001373">
    <property type="entry name" value="PRK00278.1-6"/>
    <property type="match status" value="1"/>
</dbReference>
<dbReference type="NCBIfam" id="NF001377">
    <property type="entry name" value="PRK00278.2-4"/>
    <property type="match status" value="1"/>
</dbReference>
<dbReference type="PANTHER" id="PTHR22854:SF2">
    <property type="entry name" value="INDOLE-3-GLYCEROL-PHOSPHATE SYNTHASE"/>
    <property type="match status" value="1"/>
</dbReference>
<dbReference type="PANTHER" id="PTHR22854">
    <property type="entry name" value="TRYPTOPHAN BIOSYNTHESIS PROTEIN"/>
    <property type="match status" value="1"/>
</dbReference>
<dbReference type="Pfam" id="PF00218">
    <property type="entry name" value="IGPS"/>
    <property type="match status" value="1"/>
</dbReference>
<dbReference type="SUPFAM" id="SSF51366">
    <property type="entry name" value="Ribulose-phoshate binding barrel"/>
    <property type="match status" value="1"/>
</dbReference>
<dbReference type="PROSITE" id="PS00614">
    <property type="entry name" value="IGPS"/>
    <property type="match status" value="1"/>
</dbReference>
<keyword id="KW-0028">Amino-acid biosynthesis</keyword>
<keyword id="KW-0057">Aromatic amino acid biosynthesis</keyword>
<keyword id="KW-0210">Decarboxylase</keyword>
<keyword id="KW-0456">Lyase</keyword>
<keyword id="KW-0822">Tryptophan biosynthesis</keyword>
<accession>Q4K503</accession>
<sequence>MSVPTVLEKILARKAEEVAERSARVSLAELETLARAADAPRGFARALQDQVKLKQPAVIAEIKKASPSKGVIRENFVPADIAKSYEKGGATCLSVLTDVDYFQGADAYLQQARAACKLPVIRKDFMIDPYQIVEARALGADCVLLIVAALDDARMAELAAVAKGVGLDVLVEVHDGDELERALKTLDTPLVGVNNRNLHTFEVNLETTLDLLPRIPRERLVITESGILNRADVELMEISDVYSFLVGEAFMRAESPGSELQRLFFPERGVPVSGSTLD</sequence>
<proteinExistence type="inferred from homology"/>
<reference key="1">
    <citation type="journal article" date="2005" name="Nat. Biotechnol.">
        <title>Complete genome sequence of the plant commensal Pseudomonas fluorescens Pf-5.</title>
        <authorList>
            <person name="Paulsen I.T."/>
            <person name="Press C.M."/>
            <person name="Ravel J."/>
            <person name="Kobayashi D.Y."/>
            <person name="Myers G.S.A."/>
            <person name="Mavrodi D.V."/>
            <person name="DeBoy R.T."/>
            <person name="Seshadri R."/>
            <person name="Ren Q."/>
            <person name="Madupu R."/>
            <person name="Dodson R.J."/>
            <person name="Durkin A.S."/>
            <person name="Brinkac L.M."/>
            <person name="Daugherty S.C."/>
            <person name="Sullivan S.A."/>
            <person name="Rosovitz M.J."/>
            <person name="Gwinn M.L."/>
            <person name="Zhou L."/>
            <person name="Schneider D.J."/>
            <person name="Cartinhour S.W."/>
            <person name="Nelson W.C."/>
            <person name="Weidman J."/>
            <person name="Watkins K."/>
            <person name="Tran K."/>
            <person name="Khouri H."/>
            <person name="Pierson E.A."/>
            <person name="Pierson L.S. III"/>
            <person name="Thomashow L.S."/>
            <person name="Loper J.E."/>
        </authorList>
    </citation>
    <scope>NUCLEOTIDE SEQUENCE [LARGE SCALE GENOMIC DNA]</scope>
    <source>
        <strain>ATCC BAA-477 / NRRL B-23932 / Pf-5</strain>
    </source>
</reference>
<evidence type="ECO:0000255" key="1">
    <source>
        <dbReference type="HAMAP-Rule" id="MF_00134"/>
    </source>
</evidence>